<organism>
    <name type="scientific">Arabidopsis thaliana</name>
    <name type="common">Mouse-ear cress</name>
    <dbReference type="NCBI Taxonomy" id="3702"/>
    <lineage>
        <taxon>Eukaryota</taxon>
        <taxon>Viridiplantae</taxon>
        <taxon>Streptophyta</taxon>
        <taxon>Embryophyta</taxon>
        <taxon>Tracheophyta</taxon>
        <taxon>Spermatophyta</taxon>
        <taxon>Magnoliopsida</taxon>
        <taxon>eudicotyledons</taxon>
        <taxon>Gunneridae</taxon>
        <taxon>Pentapetalae</taxon>
        <taxon>rosids</taxon>
        <taxon>malvids</taxon>
        <taxon>Brassicales</taxon>
        <taxon>Brassicaceae</taxon>
        <taxon>Camelineae</taxon>
        <taxon>Arabidopsis</taxon>
    </lineage>
</organism>
<sequence>METESDDATITVVKDMRVRLENRIRTQHDAHLDLLSSLQSIVPDIVPSLDLSLKLISSFTNRPFVATPPLPEPKVEKKHHPIVKLGTQLQQLHGHDSKSMLVDSNQRDAEADGSSGSPMALVRAMVAECLLQRVPFSPTDSSTVLRKLENDQNARPAEKAALRDLGGECGPILAVETALKSMAEENGSVELEEFEVSGKPRIMVLAIDRTRLLKELPESFQGNNESNRVVETPNSIENATVSGGGFGVSGSGNFPRPEMWGGDPNMGFRPMMNAPRGMQMMGMHHPMGIMGRPPPFPLPLPLPVPSNQKLRSEEEDLKDVEALLSKKSFKEKQQSRTGEELLDLIHRPTAKEAATAAKFKSKGGSQVKYYCRYLTKEDCRLQSGSHIACNKRHFRRLIASHTDVSLGDCSFLDTCRHMKTCKYVHYELDMADAMMAGPDKALKPLRADYCSEAELGEAQWINCDIRSFRMDILGTFGVVMADPPWDIHMELPYGTMADDEMRTLNVPSLQTDGLIFLWVTGRAMELGRECLELWGYKRVEEIIWVKTNQLQRIIRTGRTGHWLNHSKEHCLVGIKGNPEVNRNIDTDVIVAEVRETSRKPDEMYAMLERIMPRARKLELFARMHNAHAGWLSLGNQLNGVRLINEGLRARFKASYPEIDVQPPSPPRASAMETDNEPMAIDSITA</sequence>
<protein>
    <recommendedName>
        <fullName evidence="10">N(6)-adenosine-methyltransferase MT-A70-like</fullName>
        <ecNumber evidence="11">2.1.1.348</ecNumber>
    </recommendedName>
    <alternativeName>
        <fullName evidence="8">Protein EMBRYO DEFECTIVE 1706</fullName>
    </alternativeName>
    <alternativeName>
        <fullName evidence="9">Protein METTL3 homolog</fullName>
    </alternativeName>
</protein>
<evidence type="ECO:0000250" key="1">
    <source>
        <dbReference type="UniProtKB" id="Q86U44"/>
    </source>
</evidence>
<evidence type="ECO:0000255" key="2">
    <source>
        <dbReference type="PROSITE-ProRule" id="PRU00489"/>
    </source>
</evidence>
<evidence type="ECO:0000256" key="3">
    <source>
        <dbReference type="SAM" id="MobiDB-lite"/>
    </source>
</evidence>
<evidence type="ECO:0000269" key="4">
    <source>
    </source>
</evidence>
<evidence type="ECO:0000269" key="5">
    <source>
    </source>
</evidence>
<evidence type="ECO:0000269" key="6">
    <source>
    </source>
</evidence>
<evidence type="ECO:0000269" key="7">
    <source>
    </source>
</evidence>
<evidence type="ECO:0000303" key="8">
    <source>
    </source>
</evidence>
<evidence type="ECO:0000303" key="9">
    <source>
    </source>
</evidence>
<evidence type="ECO:0000305" key="10"/>
<evidence type="ECO:0000305" key="11">
    <source>
    </source>
</evidence>
<evidence type="ECO:0000312" key="12">
    <source>
        <dbReference type="Araport" id="AT4G10760"/>
    </source>
</evidence>
<evidence type="ECO:0000312" key="13">
    <source>
        <dbReference type="EMBL" id="AAC35526.1"/>
    </source>
</evidence>
<evidence type="ECO:0007744" key="14">
    <source>
    </source>
</evidence>
<comment type="function">
    <text evidence="5 7">Catalytic subunit of the N6-methyltransferase complex, a multiprotein complex that mediates N6-methyladenosine (m6A) methylation at the 5'-[AG]GAC-3' consensus sites of some mRNAs (PubMed:18505803, PubMed:28503769). Associates with MTB, FIP37, VIR and HAKAI to form the m6A writer complex which is essential for adenosine methylation at specific mRNA sequences (PubMed:28503769). N6-methyladenosine (m6A) plays a role in mRNA stability, processing, translation efficiency and editing (PubMed:18505803, PubMed:28503769).</text>
</comment>
<comment type="catalytic activity">
    <reaction evidence="11">
        <text>an adenosine in mRNA + S-adenosyl-L-methionine = an N(6)-methyladenosine in mRNA + S-adenosyl-L-homocysteine + H(+)</text>
        <dbReference type="Rhea" id="RHEA:55584"/>
        <dbReference type="Rhea" id="RHEA-COMP:12414"/>
        <dbReference type="Rhea" id="RHEA-COMP:12417"/>
        <dbReference type="ChEBI" id="CHEBI:15378"/>
        <dbReference type="ChEBI" id="CHEBI:57856"/>
        <dbReference type="ChEBI" id="CHEBI:59789"/>
        <dbReference type="ChEBI" id="CHEBI:74411"/>
        <dbReference type="ChEBI" id="CHEBI:74449"/>
        <dbReference type="EC" id="2.1.1.348"/>
    </reaction>
</comment>
<comment type="subunit">
    <text evidence="5 7">Interacts with FIP37 (PubMed:18505803, PubMed:28503769). Interacts with MTB (PubMed:28503769). Associates with MTB, FIP37, VIR and HAKAI to form the m6A writer complex which is essential for adenosine methylation at specific mRNA sequences (PubMed:28503769).</text>
</comment>
<comment type="interaction">
    <interactant intactId="EBI-1797380">
        <id>O82486</id>
    </interactant>
    <interactant intactId="EBI-1641243">
        <id>Q9ZSZ8</id>
        <label>FIP37</label>
    </interactant>
    <organismsDiffer>false</organismsDiffer>
    <experiments>5</experiments>
</comment>
<comment type="subcellular location">
    <subcellularLocation>
        <location evidence="6">Nucleus</location>
    </subcellularLocation>
</comment>
<comment type="disruption phenotype">
    <text evidence="4 5">Embryonic lethality: arrest at the globular stage of embryo development (PubMed:15266054, PubMed:18505803). Arrested seeds are deficient in mRNAs containing N6-methyladenosine (m6A) (PubMed:18505803).</text>
</comment>
<comment type="similarity">
    <text evidence="2">Belongs to the MT-A70-like family.</text>
</comment>
<comment type="sequence caution" evidence="10">
    <conflict type="erroneous gene model prediction">
        <sequence resource="EMBL-CDS" id="AAC35526"/>
    </conflict>
</comment>
<comment type="sequence caution" evidence="10">
    <conflict type="frameshift">
        <sequence resource="EMBL" id="AK227385"/>
    </conflict>
</comment>
<name>MTA70_ARATH</name>
<proteinExistence type="evidence at protein level"/>
<accession>O82486</accession>
<accession>Q9M0N2</accession>
<gene>
    <name evidence="9" type="primary">MTA</name>
    <name evidence="8" type="synonym">EMB1706</name>
    <name evidence="12" type="ordered locus">At4g10760</name>
    <name evidence="13" type="ORF">T12H20.6</name>
</gene>
<keyword id="KW-0489">Methyltransferase</keyword>
<keyword id="KW-0539">Nucleus</keyword>
<keyword id="KW-0597">Phosphoprotein</keyword>
<keyword id="KW-1185">Reference proteome</keyword>
<keyword id="KW-0694">RNA-binding</keyword>
<keyword id="KW-0949">S-adenosyl-L-methionine</keyword>
<keyword id="KW-0808">Transferase</keyword>
<reference key="1">
    <citation type="journal article" date="1999" name="Nature">
        <title>Sequence and analysis of chromosome 4 of the plant Arabidopsis thaliana.</title>
        <authorList>
            <person name="Mayer K.F.X."/>
            <person name="Schueller C."/>
            <person name="Wambutt R."/>
            <person name="Murphy G."/>
            <person name="Volckaert G."/>
            <person name="Pohl T."/>
            <person name="Duesterhoeft A."/>
            <person name="Stiekema W."/>
            <person name="Entian K.-D."/>
            <person name="Terryn N."/>
            <person name="Harris B."/>
            <person name="Ansorge W."/>
            <person name="Brandt P."/>
            <person name="Grivell L.A."/>
            <person name="Rieger M."/>
            <person name="Weichselgartner M."/>
            <person name="de Simone V."/>
            <person name="Obermaier B."/>
            <person name="Mache R."/>
            <person name="Mueller M."/>
            <person name="Kreis M."/>
            <person name="Delseny M."/>
            <person name="Puigdomenech P."/>
            <person name="Watson M."/>
            <person name="Schmidtheini T."/>
            <person name="Reichert B."/>
            <person name="Portetelle D."/>
            <person name="Perez-Alonso M."/>
            <person name="Boutry M."/>
            <person name="Bancroft I."/>
            <person name="Vos P."/>
            <person name="Hoheisel J."/>
            <person name="Zimmermann W."/>
            <person name="Wedler H."/>
            <person name="Ridley P."/>
            <person name="Langham S.-A."/>
            <person name="McCullagh B."/>
            <person name="Bilham L."/>
            <person name="Robben J."/>
            <person name="van der Schueren J."/>
            <person name="Grymonprez B."/>
            <person name="Chuang Y.-J."/>
            <person name="Vandenbussche F."/>
            <person name="Braeken M."/>
            <person name="Weltjens I."/>
            <person name="Voet M."/>
            <person name="Bastiaens I."/>
            <person name="Aert R."/>
            <person name="Defoor E."/>
            <person name="Weitzenegger T."/>
            <person name="Bothe G."/>
            <person name="Ramsperger U."/>
            <person name="Hilbert H."/>
            <person name="Braun M."/>
            <person name="Holzer E."/>
            <person name="Brandt A."/>
            <person name="Peters S."/>
            <person name="van Staveren M."/>
            <person name="Dirkse W."/>
            <person name="Mooijman P."/>
            <person name="Klein Lankhorst R."/>
            <person name="Rose M."/>
            <person name="Hauf J."/>
            <person name="Koetter P."/>
            <person name="Berneiser S."/>
            <person name="Hempel S."/>
            <person name="Feldpausch M."/>
            <person name="Lamberth S."/>
            <person name="Van den Daele H."/>
            <person name="De Keyser A."/>
            <person name="Buysshaert C."/>
            <person name="Gielen J."/>
            <person name="Villarroel R."/>
            <person name="De Clercq R."/>
            <person name="van Montagu M."/>
            <person name="Rogers J."/>
            <person name="Cronin A."/>
            <person name="Quail M.A."/>
            <person name="Bray-Allen S."/>
            <person name="Clark L."/>
            <person name="Doggett J."/>
            <person name="Hall S."/>
            <person name="Kay M."/>
            <person name="Lennard N."/>
            <person name="McLay K."/>
            <person name="Mayes R."/>
            <person name="Pettett A."/>
            <person name="Rajandream M.A."/>
            <person name="Lyne M."/>
            <person name="Benes V."/>
            <person name="Rechmann S."/>
            <person name="Borkova D."/>
            <person name="Bloecker H."/>
            <person name="Scharfe M."/>
            <person name="Grimm M."/>
            <person name="Loehnert T.-H."/>
            <person name="Dose S."/>
            <person name="de Haan M."/>
            <person name="Maarse A.C."/>
            <person name="Schaefer M."/>
            <person name="Mueller-Auer S."/>
            <person name="Gabel C."/>
            <person name="Fuchs M."/>
            <person name="Fartmann B."/>
            <person name="Granderath K."/>
            <person name="Dauner D."/>
            <person name="Herzl A."/>
            <person name="Neumann S."/>
            <person name="Argiriou A."/>
            <person name="Vitale D."/>
            <person name="Liguori R."/>
            <person name="Piravandi E."/>
            <person name="Massenet O."/>
            <person name="Quigley F."/>
            <person name="Clabauld G."/>
            <person name="Muendlein A."/>
            <person name="Felber R."/>
            <person name="Schnabl S."/>
            <person name="Hiller R."/>
            <person name="Schmidt W."/>
            <person name="Lecharny A."/>
            <person name="Aubourg S."/>
            <person name="Chefdor F."/>
            <person name="Cooke R."/>
            <person name="Berger C."/>
            <person name="Monfort A."/>
            <person name="Casacuberta E."/>
            <person name="Gibbons T."/>
            <person name="Weber N."/>
            <person name="Vandenbol M."/>
            <person name="Bargues M."/>
            <person name="Terol J."/>
            <person name="Torres A."/>
            <person name="Perez-Perez A."/>
            <person name="Purnelle B."/>
            <person name="Bent E."/>
            <person name="Johnson S."/>
            <person name="Tacon D."/>
            <person name="Jesse T."/>
            <person name="Heijnen L."/>
            <person name="Schwarz S."/>
            <person name="Scholler P."/>
            <person name="Heber S."/>
            <person name="Francs P."/>
            <person name="Bielke C."/>
            <person name="Frishman D."/>
            <person name="Haase D."/>
            <person name="Lemcke K."/>
            <person name="Mewes H.-W."/>
            <person name="Stocker S."/>
            <person name="Zaccaria P."/>
            <person name="Bevan M."/>
            <person name="Wilson R.K."/>
            <person name="de la Bastide M."/>
            <person name="Habermann K."/>
            <person name="Parnell L."/>
            <person name="Dedhia N."/>
            <person name="Gnoj L."/>
            <person name="Schutz K."/>
            <person name="Huang E."/>
            <person name="Spiegel L."/>
            <person name="Sekhon M."/>
            <person name="Murray J."/>
            <person name="Sheet P."/>
            <person name="Cordes M."/>
            <person name="Abu-Threideh J."/>
            <person name="Stoneking T."/>
            <person name="Kalicki J."/>
            <person name="Graves T."/>
            <person name="Harmon G."/>
            <person name="Edwards J."/>
            <person name="Latreille P."/>
            <person name="Courtney L."/>
            <person name="Cloud J."/>
            <person name="Abbott A."/>
            <person name="Scott K."/>
            <person name="Johnson D."/>
            <person name="Minx P."/>
            <person name="Bentley D."/>
            <person name="Fulton B."/>
            <person name="Miller N."/>
            <person name="Greco T."/>
            <person name="Kemp K."/>
            <person name="Kramer J."/>
            <person name="Fulton L."/>
            <person name="Mardis E."/>
            <person name="Dante M."/>
            <person name="Pepin K."/>
            <person name="Hillier L.W."/>
            <person name="Nelson J."/>
            <person name="Spieth J."/>
            <person name="Ryan E."/>
            <person name="Andrews S."/>
            <person name="Geisel C."/>
            <person name="Layman D."/>
            <person name="Du H."/>
            <person name="Ali J."/>
            <person name="Berghoff A."/>
            <person name="Jones K."/>
            <person name="Drone K."/>
            <person name="Cotton M."/>
            <person name="Joshu C."/>
            <person name="Antonoiu B."/>
            <person name="Zidanic M."/>
            <person name="Strong C."/>
            <person name="Sun H."/>
            <person name="Lamar B."/>
            <person name="Yordan C."/>
            <person name="Ma P."/>
            <person name="Zhong J."/>
            <person name="Preston R."/>
            <person name="Vil D."/>
            <person name="Shekher M."/>
            <person name="Matero A."/>
            <person name="Shah R."/>
            <person name="Swaby I.K."/>
            <person name="O'Shaughnessy A."/>
            <person name="Rodriguez M."/>
            <person name="Hoffman J."/>
            <person name="Till S."/>
            <person name="Granat S."/>
            <person name="Shohdy N."/>
            <person name="Hasegawa A."/>
            <person name="Hameed A."/>
            <person name="Lodhi M."/>
            <person name="Johnson A."/>
            <person name="Chen E."/>
            <person name="Marra M.A."/>
            <person name="Martienssen R."/>
            <person name="McCombie W.R."/>
        </authorList>
    </citation>
    <scope>NUCLEOTIDE SEQUENCE [LARGE SCALE GENOMIC DNA]</scope>
    <source>
        <strain>cv. Columbia</strain>
    </source>
</reference>
<reference key="2">
    <citation type="journal article" date="2017" name="Plant J.">
        <title>Araport11: a complete reannotation of the Arabidopsis thaliana reference genome.</title>
        <authorList>
            <person name="Cheng C.Y."/>
            <person name="Krishnakumar V."/>
            <person name="Chan A.P."/>
            <person name="Thibaud-Nissen F."/>
            <person name="Schobel S."/>
            <person name="Town C.D."/>
        </authorList>
    </citation>
    <scope>GENOME REANNOTATION</scope>
    <source>
        <strain>cv. Columbia</strain>
    </source>
</reference>
<reference key="3">
    <citation type="submission" date="2006-07" db="EMBL/GenBank/DDBJ databases">
        <title>Large-scale analysis of RIKEN Arabidopsis full-length (RAFL) cDNAs.</title>
        <authorList>
            <person name="Totoki Y."/>
            <person name="Seki M."/>
            <person name="Ishida J."/>
            <person name="Nakajima M."/>
            <person name="Enju A."/>
            <person name="Kamiya A."/>
            <person name="Narusaka M."/>
            <person name="Shin-i T."/>
            <person name="Nakagawa M."/>
            <person name="Sakamoto N."/>
            <person name="Oishi K."/>
            <person name="Kohara Y."/>
            <person name="Kobayashi M."/>
            <person name="Toyoda A."/>
            <person name="Sakaki Y."/>
            <person name="Sakurai T."/>
            <person name="Iida K."/>
            <person name="Akiyama K."/>
            <person name="Satou M."/>
            <person name="Toyoda T."/>
            <person name="Konagaya A."/>
            <person name="Carninci P."/>
            <person name="Kawai J."/>
            <person name="Hayashizaki Y."/>
            <person name="Shinozaki K."/>
        </authorList>
    </citation>
    <scope>NUCLEOTIDE SEQUENCE [LARGE SCALE MRNA]</scope>
    <source>
        <strain>cv. Columbia</strain>
    </source>
</reference>
<reference key="4">
    <citation type="journal article" date="2004" name="Plant Physiol.">
        <title>Identification of genes required for embryo development in Arabidopsis.</title>
        <authorList>
            <person name="Tzafrir I."/>
            <person name="Pena-Muralla R."/>
            <person name="Dickerman A."/>
            <person name="Berg M."/>
            <person name="Rogers R."/>
            <person name="Hutchens S."/>
            <person name="Sweeney T.C."/>
            <person name="McElver J."/>
            <person name="Aux G."/>
            <person name="Patton D."/>
            <person name="Meinke D."/>
        </authorList>
    </citation>
    <scope>DISRUPTION PHENOTYPE [LARGE SCALE ANALYSIS]</scope>
    <source>
        <strain>cv. Columbia</strain>
    </source>
</reference>
<reference key="5">
    <citation type="journal article" date="2008" name="Plant Cell">
        <title>MTA is an Arabidopsis messenger RNA adenosine methylase and interacts with a homolog of a sex-specific splicing factor.</title>
        <authorList>
            <person name="Zhong S."/>
            <person name="Li H."/>
            <person name="Bodi Z."/>
            <person name="Button J."/>
            <person name="Vespa L."/>
            <person name="Herzog M."/>
            <person name="Fray R.G."/>
        </authorList>
    </citation>
    <scope>FUNCTION</scope>
    <scope>CATALYTIC ACTIVITY</scope>
    <scope>INTERACTION WITH FIP37</scope>
    <scope>DISRUPTION PHENOTYPE</scope>
</reference>
<reference key="6">
    <citation type="journal article" date="2009" name="J. Proteomics">
        <title>Phosphoproteomic analysis of nuclei-enriched fractions from Arabidopsis thaliana.</title>
        <authorList>
            <person name="Jones A.M.E."/>
            <person name="MacLean D."/>
            <person name="Studholme D.J."/>
            <person name="Serna-Sanz A."/>
            <person name="Andreasson E."/>
            <person name="Rathjen J.P."/>
            <person name="Peck S.C."/>
        </authorList>
    </citation>
    <scope>SUBCELLULAR LOCATION</scope>
    <scope>PHOSPHORYLATION [LARGE SCALE ANALYSIS] AT SER-664</scope>
    <scope>IDENTIFICATION BY MASS SPECTROMETRY [LARGE SCALE ANALYSIS]</scope>
    <source>
        <strain>cv. Columbia</strain>
    </source>
</reference>
<reference key="7">
    <citation type="journal article" date="2017" name="New Phytol.">
        <title>A mRNA methylation in Arabidopsis reveals a role for the conserved E3 ubiquitin ligase HAKAI.</title>
        <authorList>
            <person name="Ruzicka K."/>
            <person name="Zhang M."/>
            <person name="Campilho A."/>
            <person name="Bodi Z."/>
            <person name="Kashif M."/>
            <person name="Saleh M."/>
            <person name="Eeckhout D."/>
            <person name="El-Showk S."/>
            <person name="Li H."/>
            <person name="Zhong S."/>
            <person name="De Jaeger G."/>
            <person name="Mongan N.P."/>
            <person name="Hejatko J."/>
            <person name="Helariutta Y."/>
            <person name="Fray R.G."/>
        </authorList>
    </citation>
    <scope>FUNCTION</scope>
    <scope>INTERACTION WITH FIP37 AND MTB</scope>
</reference>
<dbReference type="EC" id="2.1.1.348" evidence="11"/>
<dbReference type="EMBL" id="AF080119">
    <property type="protein sequence ID" value="AAC35526.1"/>
    <property type="status" value="ALT_SEQ"/>
    <property type="molecule type" value="Genomic_DNA"/>
</dbReference>
<dbReference type="EMBL" id="AL161518">
    <property type="protein sequence ID" value="CAB81177.1"/>
    <property type="molecule type" value="Genomic_DNA"/>
</dbReference>
<dbReference type="EMBL" id="CP002687">
    <property type="protein sequence ID" value="AEE82925.1"/>
    <property type="molecule type" value="Genomic_DNA"/>
</dbReference>
<dbReference type="EMBL" id="AK227385">
    <property type="status" value="NOT_ANNOTATED_CDS"/>
    <property type="molecule type" value="mRNA"/>
</dbReference>
<dbReference type="PIR" id="E85112">
    <property type="entry name" value="E85112"/>
</dbReference>
<dbReference type="PIR" id="T01901">
    <property type="entry name" value="T01901"/>
</dbReference>
<dbReference type="RefSeq" id="NP_192814.1">
    <property type="nucleotide sequence ID" value="NM_117144.4"/>
</dbReference>
<dbReference type="SMR" id="O82486"/>
<dbReference type="BioGRID" id="11969">
    <property type="interactions" value="1"/>
</dbReference>
<dbReference type="FunCoup" id="O82486">
    <property type="interactions" value="2701"/>
</dbReference>
<dbReference type="IntAct" id="O82486">
    <property type="interactions" value="1"/>
</dbReference>
<dbReference type="STRING" id="3702.O82486"/>
<dbReference type="iPTMnet" id="O82486"/>
<dbReference type="PaxDb" id="3702-AT4G10760.1"/>
<dbReference type="ProteomicsDB" id="238940"/>
<dbReference type="EnsemblPlants" id="AT4G10760.1">
    <property type="protein sequence ID" value="AT4G10760.1"/>
    <property type="gene ID" value="AT4G10760"/>
</dbReference>
<dbReference type="GeneID" id="826670"/>
<dbReference type="Gramene" id="AT4G10760.1">
    <property type="protein sequence ID" value="AT4G10760.1"/>
    <property type="gene ID" value="AT4G10760"/>
</dbReference>
<dbReference type="KEGG" id="ath:AT4G10760"/>
<dbReference type="Araport" id="AT4G10760"/>
<dbReference type="TAIR" id="AT4G10760">
    <property type="gene designation" value="MTA"/>
</dbReference>
<dbReference type="eggNOG" id="KOG2098">
    <property type="taxonomic scope" value="Eukaryota"/>
</dbReference>
<dbReference type="HOGENOM" id="CLU_018702_3_0_1"/>
<dbReference type="InParanoid" id="O82486"/>
<dbReference type="OMA" id="PESAQYQ"/>
<dbReference type="OrthoDB" id="10262526at2759"/>
<dbReference type="PhylomeDB" id="O82486"/>
<dbReference type="PRO" id="PR:O82486"/>
<dbReference type="Proteomes" id="UP000006548">
    <property type="component" value="Chromosome 4"/>
</dbReference>
<dbReference type="ExpressionAtlas" id="O82486">
    <property type="expression patterns" value="baseline and differential"/>
</dbReference>
<dbReference type="GO" id="GO:0009507">
    <property type="term" value="C:chloroplast"/>
    <property type="evidence" value="ECO:0007005"/>
    <property type="project" value="TAIR"/>
</dbReference>
<dbReference type="GO" id="GO:0016607">
    <property type="term" value="C:nuclear speck"/>
    <property type="evidence" value="ECO:0000314"/>
    <property type="project" value="TAIR"/>
</dbReference>
<dbReference type="GO" id="GO:0005634">
    <property type="term" value="C:nucleus"/>
    <property type="evidence" value="ECO:0000250"/>
    <property type="project" value="UniProtKB"/>
</dbReference>
<dbReference type="GO" id="GO:0001734">
    <property type="term" value="F:mRNA m(6)A methyltransferase activity"/>
    <property type="evidence" value="ECO:0000250"/>
    <property type="project" value="UniProtKB"/>
</dbReference>
<dbReference type="GO" id="GO:0003723">
    <property type="term" value="F:RNA binding"/>
    <property type="evidence" value="ECO:0007669"/>
    <property type="project" value="UniProtKB-KW"/>
</dbReference>
<dbReference type="GO" id="GO:0009793">
    <property type="term" value="P:embryo development ending in seed dormancy"/>
    <property type="evidence" value="ECO:0000315"/>
    <property type="project" value="UniProtKB"/>
</dbReference>
<dbReference type="GO" id="GO:0001510">
    <property type="term" value="P:RNA methylation"/>
    <property type="evidence" value="ECO:0000250"/>
    <property type="project" value="UniProtKB"/>
</dbReference>
<dbReference type="InterPro" id="IPR007757">
    <property type="entry name" value="MT-A70-like"/>
</dbReference>
<dbReference type="InterPro" id="IPR029063">
    <property type="entry name" value="SAM-dependent_MTases_sf"/>
</dbReference>
<dbReference type="PANTHER" id="PTHR12829">
    <property type="entry name" value="N6-ADENOSINE-METHYLTRANSFERASE"/>
    <property type="match status" value="1"/>
</dbReference>
<dbReference type="PANTHER" id="PTHR12829:SF2">
    <property type="entry name" value="N6-ADENOSINE-METHYLTRANSFERASE MT-A70-LIKE"/>
    <property type="match status" value="1"/>
</dbReference>
<dbReference type="Pfam" id="PF05063">
    <property type="entry name" value="MT-A70"/>
    <property type="match status" value="1"/>
</dbReference>
<dbReference type="SUPFAM" id="SSF53335">
    <property type="entry name" value="S-adenosyl-L-methionine-dependent methyltransferases"/>
    <property type="match status" value="1"/>
</dbReference>
<dbReference type="PROSITE" id="PS51143">
    <property type="entry name" value="MT_A70"/>
    <property type="match status" value="1"/>
</dbReference>
<feature type="chain" id="PRO_0000207632" description="N(6)-adenosine-methyltransferase MT-A70-like">
    <location>
        <begin position="1"/>
        <end position="685"/>
    </location>
</feature>
<feature type="region of interest" description="Positively charged region required for RNA-binding" evidence="1">
    <location>
        <begin position="552"/>
        <end position="565"/>
    </location>
</feature>
<feature type="region of interest" description="Disordered" evidence="3">
    <location>
        <begin position="657"/>
        <end position="685"/>
    </location>
</feature>
<feature type="binding site" evidence="1">
    <location>
        <begin position="464"/>
        <end position="465"/>
    </location>
    <ligand>
        <name>S-adenosyl-L-methionine</name>
        <dbReference type="ChEBI" id="CHEBI:59789"/>
    </ligand>
</feature>
<feature type="binding site" evidence="1">
    <location>
        <position position="482"/>
    </location>
    <ligand>
        <name>S-adenosyl-L-methionine</name>
        <dbReference type="ChEBI" id="CHEBI:59789"/>
    </ligand>
</feature>
<feature type="binding site" evidence="1">
    <location>
        <position position="599"/>
    </location>
    <ligand>
        <name>S-adenosyl-L-methionine</name>
        <dbReference type="ChEBI" id="CHEBI:59789"/>
    </ligand>
</feature>
<feature type="binding site" evidence="1">
    <location>
        <begin position="622"/>
        <end position="625"/>
    </location>
    <ligand>
        <name>S-adenosyl-L-methionine</name>
        <dbReference type="ChEBI" id="CHEBI:59789"/>
    </ligand>
</feature>
<feature type="binding site" evidence="1">
    <location>
        <begin position="635"/>
        <end position="636"/>
    </location>
    <ligand>
        <name>S-adenosyl-L-methionine</name>
        <dbReference type="ChEBI" id="CHEBI:59789"/>
    </ligand>
</feature>
<feature type="modified residue" description="Phosphoserine" evidence="14">
    <location>
        <position position="664"/>
    </location>
</feature>